<organism>
    <name type="scientific">Pyrococcus furiosus (strain ATCC 43587 / DSM 3638 / JCM 8422 / Vc1)</name>
    <dbReference type="NCBI Taxonomy" id="186497"/>
    <lineage>
        <taxon>Archaea</taxon>
        <taxon>Methanobacteriati</taxon>
        <taxon>Methanobacteriota</taxon>
        <taxon>Thermococci</taxon>
        <taxon>Thermococcales</taxon>
        <taxon>Thermococcaceae</taxon>
        <taxon>Pyrococcus</taxon>
    </lineage>
</organism>
<protein>
    <recommendedName>
        <fullName>Glucose-6-phosphate isomerase</fullName>
        <shortName>GPI</shortName>
        <ecNumber>5.3.1.9</ecNumber>
    </recommendedName>
    <alternativeName>
        <fullName>Phosphoglucose isomerase</fullName>
        <shortName>PGI</shortName>
    </alternativeName>
    <alternativeName>
        <fullName>Phosphohexose isomerase</fullName>
        <shortName>PHI</shortName>
    </alternativeName>
</protein>
<feature type="chain" id="PRO_0000185357" description="Glucose-6-phosphate isomerase">
    <location>
        <begin position="1"/>
        <end position="189"/>
    </location>
</feature>
<feature type="binding site" evidence="1">
    <location>
        <position position="88"/>
    </location>
    <ligand>
        <name>Fe cation</name>
        <dbReference type="ChEBI" id="CHEBI:24875"/>
    </ligand>
</feature>
<feature type="binding site" evidence="1">
    <location>
        <position position="90"/>
    </location>
    <ligand>
        <name>Fe cation</name>
        <dbReference type="ChEBI" id="CHEBI:24875"/>
    </ligand>
</feature>
<feature type="binding site" evidence="1">
    <location>
        <position position="97"/>
    </location>
    <ligand>
        <name>Fe cation</name>
        <dbReference type="ChEBI" id="CHEBI:24875"/>
    </ligand>
</feature>
<feature type="binding site" evidence="1">
    <location>
        <position position="136"/>
    </location>
    <ligand>
        <name>Fe cation</name>
        <dbReference type="ChEBI" id="CHEBI:24875"/>
    </ligand>
</feature>
<feature type="sequence conflict" description="In Ref. 1; AA sequence." evidence="2" ref="1">
    <original>D</original>
    <variation>N</variation>
    <location>
        <position position="11"/>
    </location>
</feature>
<feature type="sequence conflict" description="In Ref. 3; AA sequence." evidence="2" ref="3">
    <original>S</original>
    <variation>P</variation>
    <location>
        <position position="28"/>
    </location>
</feature>
<feature type="strand" evidence="3">
    <location>
        <begin position="6"/>
        <end position="10"/>
    </location>
</feature>
<feature type="turn" evidence="4">
    <location>
        <begin position="12"/>
        <end position="14"/>
    </location>
</feature>
<feature type="strand" evidence="4">
    <location>
        <begin position="22"/>
        <end position="26"/>
    </location>
</feature>
<feature type="helix" evidence="4">
    <location>
        <begin position="27"/>
        <end position="30"/>
    </location>
</feature>
<feature type="turn" evidence="3">
    <location>
        <begin position="31"/>
        <end position="33"/>
    </location>
</feature>
<feature type="helix" evidence="4">
    <location>
        <begin position="37"/>
        <end position="46"/>
    </location>
</feature>
<feature type="strand" evidence="4">
    <location>
        <begin position="50"/>
        <end position="57"/>
    </location>
</feature>
<feature type="strand" evidence="4">
    <location>
        <begin position="66"/>
        <end position="73"/>
    </location>
</feature>
<feature type="strand" evidence="5">
    <location>
        <begin position="91"/>
        <end position="94"/>
    </location>
</feature>
<feature type="strand" evidence="4">
    <location>
        <begin position="97"/>
        <end position="111"/>
    </location>
</feature>
<feature type="strand" evidence="4">
    <location>
        <begin position="117"/>
        <end position="122"/>
    </location>
</feature>
<feature type="strand" evidence="4">
    <location>
        <begin position="127"/>
        <end position="130"/>
    </location>
</feature>
<feature type="strand" evidence="4">
    <location>
        <begin position="135"/>
        <end position="140"/>
    </location>
</feature>
<feature type="strand" evidence="4">
    <location>
        <begin position="142"/>
        <end position="144"/>
    </location>
</feature>
<feature type="strand" evidence="4">
    <location>
        <begin position="146"/>
        <end position="153"/>
    </location>
</feature>
<feature type="helix" evidence="4">
    <location>
        <begin position="161"/>
        <end position="166"/>
    </location>
</feature>
<feature type="strand" evidence="4">
    <location>
        <begin position="169"/>
        <end position="175"/>
    </location>
</feature>
<feature type="strand" evidence="4">
    <location>
        <begin position="178"/>
        <end position="183"/>
    </location>
</feature>
<comment type="catalytic activity">
    <reaction>
        <text>alpha-D-glucose 6-phosphate = beta-D-fructose 6-phosphate</text>
        <dbReference type="Rhea" id="RHEA:11816"/>
        <dbReference type="ChEBI" id="CHEBI:57634"/>
        <dbReference type="ChEBI" id="CHEBI:58225"/>
        <dbReference type="EC" id="5.3.1.9"/>
    </reaction>
</comment>
<comment type="cofactor">
    <cofactor evidence="1">
        <name>Fe cation</name>
        <dbReference type="ChEBI" id="CHEBI:24875"/>
    </cofactor>
    <text evidence="1">Binds 1 Fe cation per subunit.</text>
</comment>
<comment type="activity regulation">
    <text>Inhibited by mannose 6-phosphate, fructose 1-phosphate and fructose 1,6-bisphosphate.</text>
</comment>
<comment type="biophysicochemical properties">
    <phDependence>
        <text>Optimum pH is 7.0.</text>
    </phDependence>
    <temperatureDependence>
        <text>Optimum temperature is 90-96 degrees Celsius. Highly thermostable.</text>
    </temperatureDependence>
</comment>
<comment type="pathway">
    <text>Carbohydrate degradation; glycolysis; D-glyceraldehyde 3-phosphate and glycerone phosphate from D-glucose: step 2/4.</text>
</comment>
<comment type="subunit">
    <text>Homodimer.</text>
</comment>
<comment type="subcellular location">
    <subcellularLocation>
        <location>Cytoplasm</location>
    </subcellularLocation>
</comment>
<comment type="similarity">
    <text evidence="2">Belongs to the archaeal-type GPI family.</text>
</comment>
<proteinExistence type="evidence at protein level"/>
<gene>
    <name type="primary">pgiA</name>
    <name type="ordered locus">PF0196</name>
</gene>
<accession>P83194</accession>
<evidence type="ECO:0000250" key="1"/>
<evidence type="ECO:0000305" key="2"/>
<evidence type="ECO:0007829" key="3">
    <source>
        <dbReference type="PDB" id="1QXR"/>
    </source>
</evidence>
<evidence type="ECO:0007829" key="4">
    <source>
        <dbReference type="PDB" id="4LUK"/>
    </source>
</evidence>
<evidence type="ECO:0007829" key="5">
    <source>
        <dbReference type="PDB" id="4LUM"/>
    </source>
</evidence>
<reference key="1">
    <citation type="journal article" date="2001" name="J. Biol. Chem.">
        <title>The phosphoglucose isomerase from the hyperthermophilic archaeon Pyrococcus furiosus is a unique glycolytic enzyme that belongs to the cupin superfamily.</title>
        <authorList>
            <person name="Verhees C.H."/>
            <person name="Huynen M.A."/>
            <person name="Ward D.E."/>
            <person name="Schiltz E."/>
            <person name="de Vos W.M."/>
            <person name="van der Oost J."/>
        </authorList>
    </citation>
    <scope>NUCLEOTIDE SEQUENCE [GENOMIC DNA]</scope>
    <scope>PROTEIN SEQUENCE OF 1-20</scope>
    <scope>CHARACTERIZATION</scope>
    <source>
        <strain>ATCC 43587 / DSM 3638 / JCM 8422 / Vc1</strain>
    </source>
</reference>
<reference key="2">
    <citation type="journal article" date="1999" name="Genetics">
        <title>Divergence of the hyperthermophilic archaea Pyrococcus furiosus and P. horikoshii inferred from complete genomic sequences.</title>
        <authorList>
            <person name="Maeder D.L."/>
            <person name="Weiss R.B."/>
            <person name="Dunn D.M."/>
            <person name="Cherry J.L."/>
            <person name="Gonzalez J.M."/>
            <person name="DiRuggiero J."/>
            <person name="Robb F.T."/>
        </authorList>
    </citation>
    <scope>NUCLEOTIDE SEQUENCE [LARGE SCALE GENOMIC DNA]</scope>
    <source>
        <strain>ATCC 43587 / DSM 3638 / JCM 8422 / Vc1</strain>
    </source>
</reference>
<reference key="3">
    <citation type="journal article" date="2001" name="J. Bacteriol.">
        <title>Novel type of glucose-6-phosphate isomerase in the hyperthermophilic archaeon Pyrococcus furiosus.</title>
        <authorList>
            <person name="Hansen T."/>
            <person name="Oehlmann M."/>
            <person name="Schoenheit P."/>
        </authorList>
    </citation>
    <scope>PROTEIN SEQUENCE OF 1-28</scope>
    <scope>CHARACTERIZATION</scope>
    <source>
        <strain>ATCC 43587 / DSM 3638 / JCM 8422 / Vc1</strain>
    </source>
</reference>
<name>G6PI_PYRFU</name>
<dbReference type="EC" id="5.3.1.9"/>
<dbReference type="EMBL" id="AF381250">
    <property type="protein sequence ID" value="AAL27992.1"/>
    <property type="molecule type" value="Genomic_DNA"/>
</dbReference>
<dbReference type="EMBL" id="AE009950">
    <property type="protein sequence ID" value="AAL80320.1"/>
    <property type="molecule type" value="Genomic_DNA"/>
</dbReference>
<dbReference type="RefSeq" id="WP_011011309.1">
    <property type="nucleotide sequence ID" value="NZ_CP023154.1"/>
</dbReference>
<dbReference type="PDB" id="1QXJ">
    <property type="method" value="X-ray"/>
    <property type="resolution" value="1.80 A"/>
    <property type="chains" value="A/B=1-189"/>
</dbReference>
<dbReference type="PDB" id="1QXR">
    <property type="method" value="X-ray"/>
    <property type="resolution" value="1.70 A"/>
    <property type="chains" value="A/B=1-189"/>
</dbReference>
<dbReference type="PDB" id="1QY4">
    <property type="method" value="X-ray"/>
    <property type="resolution" value="1.80 A"/>
    <property type="chains" value="A/B=1-189"/>
</dbReference>
<dbReference type="PDB" id="1X7N">
    <property type="method" value="X-ray"/>
    <property type="resolution" value="1.89 A"/>
    <property type="chains" value="A=1-189"/>
</dbReference>
<dbReference type="PDB" id="1X82">
    <property type="method" value="X-ray"/>
    <property type="resolution" value="1.50 A"/>
    <property type="chains" value="A=1-189"/>
</dbReference>
<dbReference type="PDB" id="1X8E">
    <property type="method" value="X-ray"/>
    <property type="resolution" value="2.80 A"/>
    <property type="chains" value="A/B=1-189"/>
</dbReference>
<dbReference type="PDB" id="2GC0">
    <property type="method" value="X-ray"/>
    <property type="resolution" value="2.00 A"/>
    <property type="chains" value="A/B=1-187"/>
</dbReference>
<dbReference type="PDB" id="2GC1">
    <property type="method" value="X-ray"/>
    <property type="resolution" value="1.95 A"/>
    <property type="chains" value="A/B=1-187"/>
</dbReference>
<dbReference type="PDB" id="2GC2">
    <property type="method" value="X-ray"/>
    <property type="resolution" value="2.10 A"/>
    <property type="chains" value="A/B=1-187"/>
</dbReference>
<dbReference type="PDB" id="2GC3">
    <property type="method" value="X-ray"/>
    <property type="resolution" value="2.10 A"/>
    <property type="chains" value="A/B=1-187"/>
</dbReference>
<dbReference type="PDB" id="3SXW">
    <property type="method" value="X-ray"/>
    <property type="resolution" value="1.80 A"/>
    <property type="chains" value="A=1-189"/>
</dbReference>
<dbReference type="PDB" id="4LTA">
    <property type="method" value="X-ray"/>
    <property type="resolution" value="2.04 A"/>
    <property type="chains" value="A/B=1-189"/>
</dbReference>
<dbReference type="PDB" id="4LUK">
    <property type="method" value="X-ray"/>
    <property type="resolution" value="1.41 A"/>
    <property type="chains" value="A=1-189"/>
</dbReference>
<dbReference type="PDB" id="4LUL">
    <property type="method" value="X-ray"/>
    <property type="resolution" value="1.89 A"/>
    <property type="chains" value="A/B=1-189"/>
</dbReference>
<dbReference type="PDB" id="4LUM">
    <property type="method" value="X-ray"/>
    <property type="resolution" value="1.79 A"/>
    <property type="chains" value="A/B=1-189"/>
</dbReference>
<dbReference type="PDBsum" id="1QXJ"/>
<dbReference type="PDBsum" id="1QXR"/>
<dbReference type="PDBsum" id="1QY4"/>
<dbReference type="PDBsum" id="1X7N"/>
<dbReference type="PDBsum" id="1X82"/>
<dbReference type="PDBsum" id="1X8E"/>
<dbReference type="PDBsum" id="2GC0"/>
<dbReference type="PDBsum" id="2GC1"/>
<dbReference type="PDBsum" id="2GC2"/>
<dbReference type="PDBsum" id="2GC3"/>
<dbReference type="PDBsum" id="3SXW"/>
<dbReference type="PDBsum" id="4LTA"/>
<dbReference type="PDBsum" id="4LUK"/>
<dbReference type="PDBsum" id="4LUL"/>
<dbReference type="PDBsum" id="4LUM"/>
<dbReference type="SMR" id="P83194"/>
<dbReference type="STRING" id="186497.PF0196"/>
<dbReference type="PaxDb" id="186497-PF0196"/>
<dbReference type="GeneID" id="41711987"/>
<dbReference type="KEGG" id="pfu:PF0196"/>
<dbReference type="PATRIC" id="fig|186497.12.peg.203"/>
<dbReference type="eggNOG" id="arCOG02602">
    <property type="taxonomic scope" value="Archaea"/>
</dbReference>
<dbReference type="HOGENOM" id="CLU_105797_0_0_2"/>
<dbReference type="OrthoDB" id="49661at2157"/>
<dbReference type="PhylomeDB" id="P83194"/>
<dbReference type="BioCyc" id="MetaCyc:MONOMER-11807"/>
<dbReference type="BRENDA" id="5.3.1.9">
    <property type="organism ID" value="5243"/>
</dbReference>
<dbReference type="SABIO-RK" id="P83194"/>
<dbReference type="UniPathway" id="UPA00109">
    <property type="reaction ID" value="UER00181"/>
</dbReference>
<dbReference type="EvolutionaryTrace" id="P83194"/>
<dbReference type="Proteomes" id="UP000001013">
    <property type="component" value="Chromosome"/>
</dbReference>
<dbReference type="GO" id="GO:0005737">
    <property type="term" value="C:cytoplasm"/>
    <property type="evidence" value="ECO:0007669"/>
    <property type="project" value="UniProtKB-SubCell"/>
</dbReference>
<dbReference type="GO" id="GO:0004347">
    <property type="term" value="F:glucose-6-phosphate isomerase activity"/>
    <property type="evidence" value="ECO:0007669"/>
    <property type="project" value="UniProtKB-UniRule"/>
</dbReference>
<dbReference type="GO" id="GO:0005506">
    <property type="term" value="F:iron ion binding"/>
    <property type="evidence" value="ECO:0007669"/>
    <property type="project" value="InterPro"/>
</dbReference>
<dbReference type="GO" id="GO:0006094">
    <property type="term" value="P:gluconeogenesis"/>
    <property type="evidence" value="ECO:0007669"/>
    <property type="project" value="UniProtKB-UniRule"/>
</dbReference>
<dbReference type="GO" id="GO:0006096">
    <property type="term" value="P:glycolytic process"/>
    <property type="evidence" value="ECO:0007669"/>
    <property type="project" value="UniProtKB-UniRule"/>
</dbReference>
<dbReference type="CDD" id="cd02218">
    <property type="entry name" value="cupin_PGI"/>
    <property type="match status" value="1"/>
</dbReference>
<dbReference type="Gene3D" id="2.60.120.10">
    <property type="entry name" value="Jelly Rolls"/>
    <property type="match status" value="1"/>
</dbReference>
<dbReference type="HAMAP" id="MF_01410">
    <property type="entry name" value="G6P_isomerase_arch"/>
    <property type="match status" value="1"/>
</dbReference>
<dbReference type="InterPro" id="IPR016758">
    <property type="entry name" value="G6P_isomerase_archaea/bacteria"/>
</dbReference>
<dbReference type="InterPro" id="IPR010551">
    <property type="entry name" value="G6P_isomerase_prok"/>
</dbReference>
<dbReference type="InterPro" id="IPR051610">
    <property type="entry name" value="GPI/OXD"/>
</dbReference>
<dbReference type="InterPro" id="IPR014710">
    <property type="entry name" value="RmlC-like_jellyroll"/>
</dbReference>
<dbReference type="InterPro" id="IPR011051">
    <property type="entry name" value="RmlC_Cupin_sf"/>
</dbReference>
<dbReference type="PANTHER" id="PTHR35848:SF6">
    <property type="entry name" value="CUPIN TYPE-2 DOMAIN-CONTAINING PROTEIN"/>
    <property type="match status" value="1"/>
</dbReference>
<dbReference type="PANTHER" id="PTHR35848">
    <property type="entry name" value="OXALATE-BINDING PROTEIN"/>
    <property type="match status" value="1"/>
</dbReference>
<dbReference type="Pfam" id="PF06560">
    <property type="entry name" value="GPI"/>
    <property type="match status" value="1"/>
</dbReference>
<dbReference type="PIRSF" id="PIRSF019325">
    <property type="entry name" value="Glucose-6-phosphate_isomerase"/>
    <property type="match status" value="1"/>
</dbReference>
<dbReference type="SUPFAM" id="SSF51182">
    <property type="entry name" value="RmlC-like cupins"/>
    <property type="match status" value="1"/>
</dbReference>
<keyword id="KW-0002">3D-structure</keyword>
<keyword id="KW-0963">Cytoplasm</keyword>
<keyword id="KW-0903">Direct protein sequencing</keyword>
<keyword id="KW-0312">Gluconeogenesis</keyword>
<keyword id="KW-0324">Glycolysis</keyword>
<keyword id="KW-0408">Iron</keyword>
<keyword id="KW-0413">Isomerase</keyword>
<keyword id="KW-0479">Metal-binding</keyword>
<keyword id="KW-1185">Reference proteome</keyword>
<sequence>MYKEPFGVKVDFETGIIEGAKKSVRRLSDMEGYFVDERAWKELVEKEDPVVYEVYAVEQEEKEGDLNFATTVLYPGKVGKEFFFTKGHFHAKLDRAEVYVALKGKGGMLLQTPEGDAKWISMEPGTVVYVPPYWAHRTVNIGDEPFIFLAIYPADAGHDYGTIAEKGFSKIVIEENGEVKVVDNPRWKK</sequence>